<name>RL5_EHRCR</name>
<evidence type="ECO:0000255" key="1">
    <source>
        <dbReference type="HAMAP-Rule" id="MF_01333"/>
    </source>
</evidence>
<evidence type="ECO:0000305" key="2"/>
<organism>
    <name type="scientific">Ehrlichia chaffeensis (strain ATCC CRL-10679 / Arkansas)</name>
    <dbReference type="NCBI Taxonomy" id="205920"/>
    <lineage>
        <taxon>Bacteria</taxon>
        <taxon>Pseudomonadati</taxon>
        <taxon>Pseudomonadota</taxon>
        <taxon>Alphaproteobacteria</taxon>
        <taxon>Rickettsiales</taxon>
        <taxon>Anaplasmataceae</taxon>
        <taxon>Ehrlichia</taxon>
    </lineage>
</organism>
<gene>
    <name evidence="1" type="primary">rplE</name>
    <name type="ordered locus">ECH_0421</name>
</gene>
<proteinExistence type="inferred from homology"/>
<protein>
    <recommendedName>
        <fullName evidence="1">Large ribosomal subunit protein uL5</fullName>
    </recommendedName>
    <alternativeName>
        <fullName evidence="2">50S ribosomal protein L5</fullName>
    </alternativeName>
</protein>
<feature type="chain" id="PRO_0000242997" description="Large ribosomal subunit protein uL5">
    <location>
        <begin position="1"/>
        <end position="177"/>
    </location>
</feature>
<keyword id="KW-1185">Reference proteome</keyword>
<keyword id="KW-0687">Ribonucleoprotein</keyword>
<keyword id="KW-0689">Ribosomal protein</keyword>
<keyword id="KW-0694">RNA-binding</keyword>
<keyword id="KW-0699">rRNA-binding</keyword>
<keyword id="KW-0820">tRNA-binding</keyword>
<sequence>MLKDLYKSHIVPSLKTKLGYSNVMQVPKIVKVCLNIGLGIRGSDSKVMNSCVRDLALIAGQKPVATYAKKSIAGFKIRKGFPIGCKVTLRNNKMYEFLERLIHVVLPREQDFKGLSVSQFDGCGNLSIGIKEHISFLEIDYDKIDKILGVDINIVTNAVNNNDAKLLLMEFGFPFIN</sequence>
<comment type="function">
    <text evidence="1">This is one of the proteins that bind and probably mediate the attachment of the 5S RNA into the large ribosomal subunit, where it forms part of the central protuberance. In the 70S ribosome it contacts protein S13 of the 30S subunit (bridge B1b), connecting the 2 subunits; this bridge is implicated in subunit movement. Contacts the P site tRNA; the 5S rRNA and some of its associated proteins might help stabilize positioning of ribosome-bound tRNAs.</text>
</comment>
<comment type="subunit">
    <text evidence="1">Part of the 50S ribosomal subunit; part of the 5S rRNA/L5/L18/L25 subcomplex. Contacts the 5S rRNA and the P site tRNA. Forms a bridge to the 30S subunit in the 70S ribosome.</text>
</comment>
<comment type="similarity">
    <text evidence="1">Belongs to the universal ribosomal protein uL5 family.</text>
</comment>
<accession>Q2GH44</accession>
<dbReference type="EMBL" id="CP000236">
    <property type="protein sequence ID" value="ABD44606.1"/>
    <property type="molecule type" value="Genomic_DNA"/>
</dbReference>
<dbReference type="RefSeq" id="WP_011452588.1">
    <property type="nucleotide sequence ID" value="NC_007799.1"/>
</dbReference>
<dbReference type="SMR" id="Q2GH44"/>
<dbReference type="STRING" id="205920.ECH_0421"/>
<dbReference type="KEGG" id="ech:ECH_0421"/>
<dbReference type="eggNOG" id="COG0094">
    <property type="taxonomic scope" value="Bacteria"/>
</dbReference>
<dbReference type="HOGENOM" id="CLU_061015_2_1_5"/>
<dbReference type="OrthoDB" id="9806626at2"/>
<dbReference type="Proteomes" id="UP000008320">
    <property type="component" value="Chromosome"/>
</dbReference>
<dbReference type="GO" id="GO:1990904">
    <property type="term" value="C:ribonucleoprotein complex"/>
    <property type="evidence" value="ECO:0007669"/>
    <property type="project" value="UniProtKB-KW"/>
</dbReference>
<dbReference type="GO" id="GO:0005840">
    <property type="term" value="C:ribosome"/>
    <property type="evidence" value="ECO:0007669"/>
    <property type="project" value="UniProtKB-KW"/>
</dbReference>
<dbReference type="GO" id="GO:0019843">
    <property type="term" value="F:rRNA binding"/>
    <property type="evidence" value="ECO:0007669"/>
    <property type="project" value="UniProtKB-UniRule"/>
</dbReference>
<dbReference type="GO" id="GO:0003735">
    <property type="term" value="F:structural constituent of ribosome"/>
    <property type="evidence" value="ECO:0007669"/>
    <property type="project" value="InterPro"/>
</dbReference>
<dbReference type="GO" id="GO:0000049">
    <property type="term" value="F:tRNA binding"/>
    <property type="evidence" value="ECO:0007669"/>
    <property type="project" value="UniProtKB-UniRule"/>
</dbReference>
<dbReference type="GO" id="GO:0006412">
    <property type="term" value="P:translation"/>
    <property type="evidence" value="ECO:0007669"/>
    <property type="project" value="UniProtKB-UniRule"/>
</dbReference>
<dbReference type="FunFam" id="3.30.1440.10:FF:000001">
    <property type="entry name" value="50S ribosomal protein L5"/>
    <property type="match status" value="1"/>
</dbReference>
<dbReference type="Gene3D" id="3.30.1440.10">
    <property type="match status" value="1"/>
</dbReference>
<dbReference type="HAMAP" id="MF_01333_B">
    <property type="entry name" value="Ribosomal_uL5_B"/>
    <property type="match status" value="1"/>
</dbReference>
<dbReference type="InterPro" id="IPR002132">
    <property type="entry name" value="Ribosomal_uL5"/>
</dbReference>
<dbReference type="InterPro" id="IPR020930">
    <property type="entry name" value="Ribosomal_uL5_bac-type"/>
</dbReference>
<dbReference type="InterPro" id="IPR031309">
    <property type="entry name" value="Ribosomal_uL5_C"/>
</dbReference>
<dbReference type="InterPro" id="IPR020929">
    <property type="entry name" value="Ribosomal_uL5_CS"/>
</dbReference>
<dbReference type="InterPro" id="IPR022803">
    <property type="entry name" value="Ribosomal_uL5_dom_sf"/>
</dbReference>
<dbReference type="InterPro" id="IPR031310">
    <property type="entry name" value="Ribosomal_uL5_N"/>
</dbReference>
<dbReference type="NCBIfam" id="NF000585">
    <property type="entry name" value="PRK00010.1"/>
    <property type="match status" value="1"/>
</dbReference>
<dbReference type="PANTHER" id="PTHR11994">
    <property type="entry name" value="60S RIBOSOMAL PROTEIN L11-RELATED"/>
    <property type="match status" value="1"/>
</dbReference>
<dbReference type="Pfam" id="PF00281">
    <property type="entry name" value="Ribosomal_L5"/>
    <property type="match status" value="1"/>
</dbReference>
<dbReference type="Pfam" id="PF00673">
    <property type="entry name" value="Ribosomal_L5_C"/>
    <property type="match status" value="1"/>
</dbReference>
<dbReference type="PIRSF" id="PIRSF002161">
    <property type="entry name" value="Ribosomal_L5"/>
    <property type="match status" value="1"/>
</dbReference>
<dbReference type="SUPFAM" id="SSF55282">
    <property type="entry name" value="RL5-like"/>
    <property type="match status" value="1"/>
</dbReference>
<dbReference type="PROSITE" id="PS00358">
    <property type="entry name" value="RIBOSOMAL_L5"/>
    <property type="match status" value="1"/>
</dbReference>
<reference key="1">
    <citation type="journal article" date="2006" name="PLoS Genet.">
        <title>Comparative genomics of emerging human ehrlichiosis agents.</title>
        <authorList>
            <person name="Dunning Hotopp J.C."/>
            <person name="Lin M."/>
            <person name="Madupu R."/>
            <person name="Crabtree J."/>
            <person name="Angiuoli S.V."/>
            <person name="Eisen J.A."/>
            <person name="Seshadri R."/>
            <person name="Ren Q."/>
            <person name="Wu M."/>
            <person name="Utterback T.R."/>
            <person name="Smith S."/>
            <person name="Lewis M."/>
            <person name="Khouri H."/>
            <person name="Zhang C."/>
            <person name="Niu H."/>
            <person name="Lin Q."/>
            <person name="Ohashi N."/>
            <person name="Zhi N."/>
            <person name="Nelson W.C."/>
            <person name="Brinkac L.M."/>
            <person name="Dodson R.J."/>
            <person name="Rosovitz M.J."/>
            <person name="Sundaram J.P."/>
            <person name="Daugherty S.C."/>
            <person name="Davidsen T."/>
            <person name="Durkin A.S."/>
            <person name="Gwinn M.L."/>
            <person name="Haft D.H."/>
            <person name="Selengut J.D."/>
            <person name="Sullivan S.A."/>
            <person name="Zafar N."/>
            <person name="Zhou L."/>
            <person name="Benahmed F."/>
            <person name="Forberger H."/>
            <person name="Halpin R."/>
            <person name="Mulligan S."/>
            <person name="Robinson J."/>
            <person name="White O."/>
            <person name="Rikihisa Y."/>
            <person name="Tettelin H."/>
        </authorList>
    </citation>
    <scope>NUCLEOTIDE SEQUENCE [LARGE SCALE GENOMIC DNA]</scope>
    <source>
        <strain>ATCC CRL-10679 / Arkansas</strain>
    </source>
</reference>